<keyword id="KW-0963">Cytoplasm</keyword>
<keyword id="KW-0238">DNA-binding</keyword>
<keyword id="KW-1185">Reference proteome</keyword>
<comment type="function">
    <text evidence="1">Binds to DNA and alters its conformation. May be involved in regulation of gene expression, nucleoid organization and DNA protection.</text>
</comment>
<comment type="subunit">
    <text evidence="1">Homodimer.</text>
</comment>
<comment type="subcellular location">
    <subcellularLocation>
        <location evidence="1">Cytoplasm</location>
        <location evidence="1">Nucleoid</location>
    </subcellularLocation>
</comment>
<comment type="similarity">
    <text evidence="1">Belongs to the YbaB/EbfC family.</text>
</comment>
<sequence>MAGFGLPNFGQITEAFKKAQQIQQDAQKLQEELDDMELEGTNEDGRVTVWLSGNQQPIRVKVENSILKEEEEIVEAAILEAMQKAHEISTSNMKSRMQELTGGLNLNLPGINDDN</sequence>
<accession>Q7VEJ3</accession>
<reference key="1">
    <citation type="journal article" date="2003" name="Proc. Natl. Acad. Sci. U.S.A.">
        <title>Genome sequence of the cyanobacterium Prochlorococcus marinus SS120, a nearly minimal oxyphototrophic genome.</title>
        <authorList>
            <person name="Dufresne A."/>
            <person name="Salanoubat M."/>
            <person name="Partensky F."/>
            <person name="Artiguenave F."/>
            <person name="Axmann I.M."/>
            <person name="Barbe V."/>
            <person name="Duprat S."/>
            <person name="Galperin M.Y."/>
            <person name="Koonin E.V."/>
            <person name="Le Gall F."/>
            <person name="Makarova K.S."/>
            <person name="Ostrowski M."/>
            <person name="Oztas S."/>
            <person name="Robert C."/>
            <person name="Rogozin I.B."/>
            <person name="Scanlan D.J."/>
            <person name="Tandeau de Marsac N."/>
            <person name="Weissenbach J."/>
            <person name="Wincker P."/>
            <person name="Wolf Y.I."/>
            <person name="Hess W.R."/>
        </authorList>
    </citation>
    <scope>NUCLEOTIDE SEQUENCE [LARGE SCALE GENOMIC DNA]</scope>
    <source>
        <strain>SARG / CCMP1375 / SS120</strain>
    </source>
</reference>
<evidence type="ECO:0000255" key="1">
    <source>
        <dbReference type="HAMAP-Rule" id="MF_00274"/>
    </source>
</evidence>
<gene>
    <name type="ordered locus">Pro_0020</name>
</gene>
<feature type="chain" id="PRO_0000170420" description="Nucleoid-associated protein Pro_0020">
    <location>
        <begin position="1"/>
        <end position="115"/>
    </location>
</feature>
<protein>
    <recommendedName>
        <fullName evidence="1">Nucleoid-associated protein Pro_0020</fullName>
    </recommendedName>
</protein>
<name>Y020_PROMA</name>
<proteinExistence type="inferred from homology"/>
<organism>
    <name type="scientific">Prochlorococcus marinus (strain SARG / CCMP1375 / SS120)</name>
    <dbReference type="NCBI Taxonomy" id="167539"/>
    <lineage>
        <taxon>Bacteria</taxon>
        <taxon>Bacillati</taxon>
        <taxon>Cyanobacteriota</taxon>
        <taxon>Cyanophyceae</taxon>
        <taxon>Synechococcales</taxon>
        <taxon>Prochlorococcaceae</taxon>
        <taxon>Prochlorococcus</taxon>
    </lineage>
</organism>
<dbReference type="EMBL" id="AE017126">
    <property type="protein sequence ID" value="AAP99066.1"/>
    <property type="molecule type" value="Genomic_DNA"/>
</dbReference>
<dbReference type="RefSeq" id="NP_874414.1">
    <property type="nucleotide sequence ID" value="NC_005042.1"/>
</dbReference>
<dbReference type="RefSeq" id="WP_011124175.1">
    <property type="nucleotide sequence ID" value="NC_005042.1"/>
</dbReference>
<dbReference type="SMR" id="Q7VEJ3"/>
<dbReference type="STRING" id="167539.Pro_0020"/>
<dbReference type="EnsemblBacteria" id="AAP99066">
    <property type="protein sequence ID" value="AAP99066"/>
    <property type="gene ID" value="Pro_0020"/>
</dbReference>
<dbReference type="KEGG" id="pma:Pro_0020"/>
<dbReference type="PATRIC" id="fig|167539.5.peg.20"/>
<dbReference type="eggNOG" id="COG0718">
    <property type="taxonomic scope" value="Bacteria"/>
</dbReference>
<dbReference type="HOGENOM" id="CLU_140930_0_1_3"/>
<dbReference type="OrthoDB" id="487780at2"/>
<dbReference type="Proteomes" id="UP000001420">
    <property type="component" value="Chromosome"/>
</dbReference>
<dbReference type="GO" id="GO:0043590">
    <property type="term" value="C:bacterial nucleoid"/>
    <property type="evidence" value="ECO:0007669"/>
    <property type="project" value="UniProtKB-UniRule"/>
</dbReference>
<dbReference type="GO" id="GO:0005829">
    <property type="term" value="C:cytosol"/>
    <property type="evidence" value="ECO:0007669"/>
    <property type="project" value="TreeGrafter"/>
</dbReference>
<dbReference type="GO" id="GO:0003677">
    <property type="term" value="F:DNA binding"/>
    <property type="evidence" value="ECO:0007669"/>
    <property type="project" value="UniProtKB-UniRule"/>
</dbReference>
<dbReference type="Gene3D" id="3.30.1310.10">
    <property type="entry name" value="Nucleoid-associated protein YbaB-like domain"/>
    <property type="match status" value="1"/>
</dbReference>
<dbReference type="HAMAP" id="MF_00274">
    <property type="entry name" value="DNA_YbaB_EbfC"/>
    <property type="match status" value="1"/>
</dbReference>
<dbReference type="InterPro" id="IPR036894">
    <property type="entry name" value="YbaB-like_sf"/>
</dbReference>
<dbReference type="InterPro" id="IPR004401">
    <property type="entry name" value="YbaB/EbfC"/>
</dbReference>
<dbReference type="NCBIfam" id="TIGR00103">
    <property type="entry name" value="DNA_YbaB_EbfC"/>
    <property type="match status" value="1"/>
</dbReference>
<dbReference type="PANTHER" id="PTHR33449">
    <property type="entry name" value="NUCLEOID-ASSOCIATED PROTEIN YBAB"/>
    <property type="match status" value="1"/>
</dbReference>
<dbReference type="PANTHER" id="PTHR33449:SF1">
    <property type="entry name" value="NUCLEOID-ASSOCIATED PROTEIN YBAB"/>
    <property type="match status" value="1"/>
</dbReference>
<dbReference type="Pfam" id="PF02575">
    <property type="entry name" value="YbaB_DNA_bd"/>
    <property type="match status" value="1"/>
</dbReference>
<dbReference type="PIRSF" id="PIRSF004555">
    <property type="entry name" value="UCP004555"/>
    <property type="match status" value="1"/>
</dbReference>
<dbReference type="SUPFAM" id="SSF82607">
    <property type="entry name" value="YbaB-like"/>
    <property type="match status" value="1"/>
</dbReference>